<evidence type="ECO:0000250" key="1"/>
<evidence type="ECO:0000255" key="2"/>
<evidence type="ECO:0000305" key="3"/>
<keyword id="KW-0145">Chemotaxis</keyword>
<keyword id="KW-0202">Cytokine</keyword>
<keyword id="KW-1015">Disulfide bond</keyword>
<keyword id="KW-0395">Inflammatory response</keyword>
<keyword id="KW-1185">Reference proteome</keyword>
<keyword id="KW-0964">Secreted</keyword>
<keyword id="KW-0732">Signal</keyword>
<accession>Q8HYP8</accession>
<organism>
    <name type="scientific">Macaca mulatta</name>
    <name type="common">Rhesus macaque</name>
    <dbReference type="NCBI Taxonomy" id="9544"/>
    <lineage>
        <taxon>Eukaryota</taxon>
        <taxon>Metazoa</taxon>
        <taxon>Chordata</taxon>
        <taxon>Craniata</taxon>
        <taxon>Vertebrata</taxon>
        <taxon>Euteleostomi</taxon>
        <taxon>Mammalia</taxon>
        <taxon>Eutheria</taxon>
        <taxon>Euarchontoglires</taxon>
        <taxon>Primates</taxon>
        <taxon>Haplorrhini</taxon>
        <taxon>Catarrhini</taxon>
        <taxon>Cercopithecidae</taxon>
        <taxon>Cercopithecinae</taxon>
        <taxon>Macaca</taxon>
    </lineage>
</organism>
<name>CCL18_MACMU</name>
<feature type="signal peptide" evidence="2">
    <location>
        <begin position="1"/>
        <end position="19"/>
    </location>
</feature>
<feature type="chain" id="PRO_0000005213" description="C-C motif chemokine 18">
    <location>
        <begin position="20"/>
        <end position="88"/>
    </location>
</feature>
<feature type="disulfide bond" evidence="1">
    <location>
        <begin position="29"/>
        <end position="53"/>
    </location>
</feature>
<feature type="disulfide bond" evidence="1">
    <location>
        <begin position="30"/>
        <end position="69"/>
    </location>
</feature>
<sequence>MKGLAAALLVLCTVALCSCAQVGTKKEFCCLVYTSRQIPQKFIVDYSETSPQCTKPGVILLSKKRRQICADPNKKWVQKYISDLKLNA</sequence>
<proteinExistence type="inferred from homology"/>
<reference key="1">
    <citation type="journal article" date="2002" name="Cytokine">
        <title>Molecular cloning and sequencing of 25 different rhesus macaque chemokine cDNAs reveals evolutionary conservation among C, CC, CXC, and CX3C families of chemokines.</title>
        <authorList>
            <person name="Basu S."/>
            <person name="Schaefer T.M."/>
            <person name="Ghosh M."/>
            <person name="Fuller C.L."/>
            <person name="Reinhart T.A."/>
        </authorList>
    </citation>
    <scope>NUCLEOTIDE SEQUENCE [MRNA]</scope>
</reference>
<comment type="function">
    <text evidence="1">Chemotactic factor that attracts lymphocytes but not monocytes or granulocytes. May be involved in B-cell migration into B-cell follicles in lymph nodes. Attracts naive T-lymphocytes toward dendritic cells and activated macrophages in lymph nodes, has chemotactic activity for naive T-cells, CD4+ and CD8+ T-cells and thus may play a role in both humoral and cell-mediated immunity responses (By similarity).</text>
</comment>
<comment type="subcellular location">
    <subcellularLocation>
        <location evidence="1">Secreted</location>
    </subcellularLocation>
</comment>
<comment type="PTM">
    <text>The Cys-29/Cys-53 disulfide bond is required for activity.</text>
</comment>
<comment type="similarity">
    <text evidence="3">Belongs to the intercrine beta (chemokine CC) family.</text>
</comment>
<dbReference type="EMBL" id="AF449272">
    <property type="protein sequence ID" value="AAN76076.1"/>
    <property type="molecule type" value="mRNA"/>
</dbReference>
<dbReference type="RefSeq" id="NP_001028025.1">
    <property type="nucleotide sequence ID" value="NM_001032853.1"/>
</dbReference>
<dbReference type="SMR" id="Q8HYP8"/>
<dbReference type="FunCoup" id="Q8HYP8">
    <property type="interactions" value="494"/>
</dbReference>
<dbReference type="STRING" id="9544.ENSMMUP00000060950"/>
<dbReference type="PaxDb" id="9544-ENSMMUP00000001257"/>
<dbReference type="GeneID" id="574181"/>
<dbReference type="KEGG" id="mcc:574181"/>
<dbReference type="CTD" id="6362"/>
<dbReference type="eggNOG" id="ENOG502S8M4">
    <property type="taxonomic scope" value="Eukaryota"/>
</dbReference>
<dbReference type="InParanoid" id="Q8HYP8"/>
<dbReference type="OrthoDB" id="9447832at2759"/>
<dbReference type="Proteomes" id="UP000006718">
    <property type="component" value="Unassembled WGS sequence"/>
</dbReference>
<dbReference type="GO" id="GO:0005615">
    <property type="term" value="C:extracellular space"/>
    <property type="evidence" value="ECO:0000318"/>
    <property type="project" value="GO_Central"/>
</dbReference>
<dbReference type="GO" id="GO:0048020">
    <property type="term" value="F:CCR chemokine receptor binding"/>
    <property type="evidence" value="ECO:0000318"/>
    <property type="project" value="GO_Central"/>
</dbReference>
<dbReference type="GO" id="GO:0008009">
    <property type="term" value="F:chemokine activity"/>
    <property type="evidence" value="ECO:0000318"/>
    <property type="project" value="GO_Central"/>
</dbReference>
<dbReference type="GO" id="GO:0061844">
    <property type="term" value="P:antimicrobial humoral immune response mediated by antimicrobial peptide"/>
    <property type="evidence" value="ECO:0000318"/>
    <property type="project" value="GO_Central"/>
</dbReference>
<dbReference type="GO" id="GO:0060326">
    <property type="term" value="P:cell chemotaxis"/>
    <property type="evidence" value="ECO:0000318"/>
    <property type="project" value="GO_Central"/>
</dbReference>
<dbReference type="GO" id="GO:0070098">
    <property type="term" value="P:chemokine-mediated signaling pathway"/>
    <property type="evidence" value="ECO:0000318"/>
    <property type="project" value="GO_Central"/>
</dbReference>
<dbReference type="GO" id="GO:0006954">
    <property type="term" value="P:inflammatory response"/>
    <property type="evidence" value="ECO:0000318"/>
    <property type="project" value="GO_Central"/>
</dbReference>
<dbReference type="GO" id="GO:0030335">
    <property type="term" value="P:positive regulation of cell migration"/>
    <property type="evidence" value="ECO:0000318"/>
    <property type="project" value="GO_Central"/>
</dbReference>
<dbReference type="CDD" id="cd00272">
    <property type="entry name" value="Chemokine_CC"/>
    <property type="match status" value="1"/>
</dbReference>
<dbReference type="FunFam" id="2.40.50.40:FF:000002">
    <property type="entry name" value="C-C motif chemokine"/>
    <property type="match status" value="1"/>
</dbReference>
<dbReference type="Gene3D" id="2.40.50.40">
    <property type="match status" value="1"/>
</dbReference>
<dbReference type="InterPro" id="IPR039809">
    <property type="entry name" value="Chemokine_b/g/d"/>
</dbReference>
<dbReference type="InterPro" id="IPR000827">
    <property type="entry name" value="Chemokine_CC_CS"/>
</dbReference>
<dbReference type="InterPro" id="IPR001811">
    <property type="entry name" value="Chemokine_IL8-like_dom"/>
</dbReference>
<dbReference type="InterPro" id="IPR036048">
    <property type="entry name" value="Interleukin_8-like_sf"/>
</dbReference>
<dbReference type="PANTHER" id="PTHR12015:SF94">
    <property type="entry name" value="C-C MOTIF CHEMOKINE 18"/>
    <property type="match status" value="1"/>
</dbReference>
<dbReference type="PANTHER" id="PTHR12015">
    <property type="entry name" value="SMALL INDUCIBLE CYTOKINE A"/>
    <property type="match status" value="1"/>
</dbReference>
<dbReference type="Pfam" id="PF00048">
    <property type="entry name" value="IL8"/>
    <property type="match status" value="1"/>
</dbReference>
<dbReference type="PRINTS" id="PR00436">
    <property type="entry name" value="INTERLEUKIN8"/>
</dbReference>
<dbReference type="SMART" id="SM00199">
    <property type="entry name" value="SCY"/>
    <property type="match status" value="1"/>
</dbReference>
<dbReference type="SUPFAM" id="SSF54117">
    <property type="entry name" value="Interleukin 8-like chemokines"/>
    <property type="match status" value="1"/>
</dbReference>
<dbReference type="PROSITE" id="PS00472">
    <property type="entry name" value="SMALL_CYTOKINES_CC"/>
    <property type="match status" value="1"/>
</dbReference>
<gene>
    <name type="primary">CCL18</name>
</gene>
<protein>
    <recommendedName>
        <fullName>C-C motif chemokine 18</fullName>
    </recommendedName>
    <alternativeName>
        <fullName>Small-inducible cytokine A18</fullName>
    </alternativeName>
</protein>